<accession>A9KQI8</accession>
<feature type="chain" id="PRO_0000336826" description="UDP-N-acetylmuramate--L-alanine ligase">
    <location>
        <begin position="1"/>
        <end position="469"/>
    </location>
</feature>
<feature type="binding site" evidence="1">
    <location>
        <begin position="118"/>
        <end position="124"/>
    </location>
    <ligand>
        <name>ATP</name>
        <dbReference type="ChEBI" id="CHEBI:30616"/>
    </ligand>
</feature>
<gene>
    <name evidence="1" type="primary">murC</name>
    <name type="ordered locus">Cphy_0107</name>
</gene>
<keyword id="KW-0067">ATP-binding</keyword>
<keyword id="KW-0131">Cell cycle</keyword>
<keyword id="KW-0132">Cell division</keyword>
<keyword id="KW-0133">Cell shape</keyword>
<keyword id="KW-0961">Cell wall biogenesis/degradation</keyword>
<keyword id="KW-0963">Cytoplasm</keyword>
<keyword id="KW-0436">Ligase</keyword>
<keyword id="KW-0547">Nucleotide-binding</keyword>
<keyword id="KW-0573">Peptidoglycan synthesis</keyword>
<keyword id="KW-1185">Reference proteome</keyword>
<reference key="1">
    <citation type="submission" date="2007-11" db="EMBL/GenBank/DDBJ databases">
        <title>Complete genome sequence of Clostridium phytofermentans ISDg.</title>
        <authorList>
            <person name="Leschine S.B."/>
            <person name="Warnick T.A."/>
            <person name="Blanchard J.L."/>
            <person name="Schnell D.J."/>
            <person name="Petit E.L."/>
            <person name="LaTouf W.G."/>
            <person name="Copeland A."/>
            <person name="Lucas S."/>
            <person name="Lapidus A."/>
            <person name="Barry K."/>
            <person name="Glavina del Rio T."/>
            <person name="Dalin E."/>
            <person name="Tice H."/>
            <person name="Pitluck S."/>
            <person name="Kiss H."/>
            <person name="Brettin T."/>
            <person name="Bruce D."/>
            <person name="Detter J.C."/>
            <person name="Han C."/>
            <person name="Kuske C."/>
            <person name="Schmutz J."/>
            <person name="Larimer F."/>
            <person name="Land M."/>
            <person name="Hauser L."/>
            <person name="Kyrpides N."/>
            <person name="Kim E.A."/>
            <person name="Richardson P."/>
        </authorList>
    </citation>
    <scope>NUCLEOTIDE SEQUENCE [LARGE SCALE GENOMIC DNA]</scope>
    <source>
        <strain>ATCC 700394 / DSM 18823 / ISDg</strain>
    </source>
</reference>
<proteinExistence type="inferred from homology"/>
<protein>
    <recommendedName>
        <fullName evidence="1">UDP-N-acetylmuramate--L-alanine ligase</fullName>
        <ecNumber evidence="1">6.3.2.8</ecNumber>
    </recommendedName>
    <alternativeName>
        <fullName evidence="1">UDP-N-acetylmuramoyl-L-alanine synthetase</fullName>
    </alternativeName>
</protein>
<name>MURC_LACP7</name>
<sequence length="469" mass="52275">MYHIDFTKPIHVHFIGIGGISMSGLAELLHTKGFTVSGSDAKDSKIVDRLRHLGITIFIGQKAENITEDIDLVVYTAAVKSDNVEYQAVQKHNIPMLDRADFLGQVMLQYKNAIGVSGTHGKTTTTSMVSLMMLEGNFDPTISVGGILDNIEGNIRIGHSENFIVESCEYKNSFLSFNPAHAIILNIEAEHLDFFKDIEDIRTSFHTFAKKLPDYGNLVVWGGIDRYEELIEDLSCNVITYGMFSSEEEREQNKDRYDYAACNVTSDDFGLRSYDLYKHGKFVDRINLAVIGDHNVLNSLAAISLVDTLGGTMSAIKKALLAYKGTERRFERKGVLNGITIVDDYAHHPSEIKATLIAAASYPHKDIWCVFQPHTYTRTKSFFHDFTTALALADKIVLADIYAAREENPGDISSKDIQNELLKIGKEAYYISDFAEIEKFLLEHCTNGDLLITMGAGDVVSIGESLLQK</sequence>
<comment type="function">
    <text evidence="1">Cell wall formation.</text>
</comment>
<comment type="catalytic activity">
    <reaction evidence="1">
        <text>UDP-N-acetyl-alpha-D-muramate + L-alanine + ATP = UDP-N-acetyl-alpha-D-muramoyl-L-alanine + ADP + phosphate + H(+)</text>
        <dbReference type="Rhea" id="RHEA:23372"/>
        <dbReference type="ChEBI" id="CHEBI:15378"/>
        <dbReference type="ChEBI" id="CHEBI:30616"/>
        <dbReference type="ChEBI" id="CHEBI:43474"/>
        <dbReference type="ChEBI" id="CHEBI:57972"/>
        <dbReference type="ChEBI" id="CHEBI:70757"/>
        <dbReference type="ChEBI" id="CHEBI:83898"/>
        <dbReference type="ChEBI" id="CHEBI:456216"/>
        <dbReference type="EC" id="6.3.2.8"/>
    </reaction>
</comment>
<comment type="pathway">
    <text evidence="1">Cell wall biogenesis; peptidoglycan biosynthesis.</text>
</comment>
<comment type="subcellular location">
    <subcellularLocation>
        <location evidence="1">Cytoplasm</location>
    </subcellularLocation>
</comment>
<comment type="similarity">
    <text evidence="1">Belongs to the MurCDEF family.</text>
</comment>
<organism>
    <name type="scientific">Lachnoclostridium phytofermentans (strain ATCC 700394 / DSM 18823 / ISDg)</name>
    <name type="common">Clostridium phytofermentans</name>
    <dbReference type="NCBI Taxonomy" id="357809"/>
    <lineage>
        <taxon>Bacteria</taxon>
        <taxon>Bacillati</taxon>
        <taxon>Bacillota</taxon>
        <taxon>Clostridia</taxon>
        <taxon>Lachnospirales</taxon>
        <taxon>Lachnospiraceae</taxon>
    </lineage>
</organism>
<evidence type="ECO:0000255" key="1">
    <source>
        <dbReference type="HAMAP-Rule" id="MF_00046"/>
    </source>
</evidence>
<dbReference type="EC" id="6.3.2.8" evidence="1"/>
<dbReference type="EMBL" id="CP000885">
    <property type="protein sequence ID" value="ABX40497.1"/>
    <property type="molecule type" value="Genomic_DNA"/>
</dbReference>
<dbReference type="RefSeq" id="WP_012198140.1">
    <property type="nucleotide sequence ID" value="NC_010001.1"/>
</dbReference>
<dbReference type="SMR" id="A9KQI8"/>
<dbReference type="STRING" id="357809.Cphy_0107"/>
<dbReference type="KEGG" id="cpy:Cphy_0107"/>
<dbReference type="eggNOG" id="COG0773">
    <property type="taxonomic scope" value="Bacteria"/>
</dbReference>
<dbReference type="HOGENOM" id="CLU_028104_1_0_9"/>
<dbReference type="OrthoDB" id="9804126at2"/>
<dbReference type="UniPathway" id="UPA00219"/>
<dbReference type="Proteomes" id="UP000000370">
    <property type="component" value="Chromosome"/>
</dbReference>
<dbReference type="GO" id="GO:0005737">
    <property type="term" value="C:cytoplasm"/>
    <property type="evidence" value="ECO:0007669"/>
    <property type="project" value="UniProtKB-SubCell"/>
</dbReference>
<dbReference type="GO" id="GO:0005524">
    <property type="term" value="F:ATP binding"/>
    <property type="evidence" value="ECO:0007669"/>
    <property type="project" value="UniProtKB-UniRule"/>
</dbReference>
<dbReference type="GO" id="GO:0008763">
    <property type="term" value="F:UDP-N-acetylmuramate-L-alanine ligase activity"/>
    <property type="evidence" value="ECO:0007669"/>
    <property type="project" value="UniProtKB-UniRule"/>
</dbReference>
<dbReference type="GO" id="GO:0051301">
    <property type="term" value="P:cell division"/>
    <property type="evidence" value="ECO:0007669"/>
    <property type="project" value="UniProtKB-KW"/>
</dbReference>
<dbReference type="GO" id="GO:0071555">
    <property type="term" value="P:cell wall organization"/>
    <property type="evidence" value="ECO:0007669"/>
    <property type="project" value="UniProtKB-KW"/>
</dbReference>
<dbReference type="GO" id="GO:0009252">
    <property type="term" value="P:peptidoglycan biosynthetic process"/>
    <property type="evidence" value="ECO:0007669"/>
    <property type="project" value="UniProtKB-UniRule"/>
</dbReference>
<dbReference type="GO" id="GO:0008360">
    <property type="term" value="P:regulation of cell shape"/>
    <property type="evidence" value="ECO:0007669"/>
    <property type="project" value="UniProtKB-KW"/>
</dbReference>
<dbReference type="Gene3D" id="3.90.190.20">
    <property type="entry name" value="Mur ligase, C-terminal domain"/>
    <property type="match status" value="1"/>
</dbReference>
<dbReference type="Gene3D" id="3.40.1190.10">
    <property type="entry name" value="Mur-like, catalytic domain"/>
    <property type="match status" value="1"/>
</dbReference>
<dbReference type="Gene3D" id="3.40.50.720">
    <property type="entry name" value="NAD(P)-binding Rossmann-like Domain"/>
    <property type="match status" value="1"/>
</dbReference>
<dbReference type="HAMAP" id="MF_00046">
    <property type="entry name" value="MurC"/>
    <property type="match status" value="1"/>
</dbReference>
<dbReference type="InterPro" id="IPR036565">
    <property type="entry name" value="Mur-like_cat_sf"/>
</dbReference>
<dbReference type="InterPro" id="IPR004101">
    <property type="entry name" value="Mur_ligase_C"/>
</dbReference>
<dbReference type="InterPro" id="IPR036615">
    <property type="entry name" value="Mur_ligase_C_dom_sf"/>
</dbReference>
<dbReference type="InterPro" id="IPR013221">
    <property type="entry name" value="Mur_ligase_cen"/>
</dbReference>
<dbReference type="InterPro" id="IPR000713">
    <property type="entry name" value="Mur_ligase_N"/>
</dbReference>
<dbReference type="InterPro" id="IPR050061">
    <property type="entry name" value="MurCDEF_pg_biosynth"/>
</dbReference>
<dbReference type="InterPro" id="IPR005758">
    <property type="entry name" value="UDP-N-AcMur_Ala_ligase_MurC"/>
</dbReference>
<dbReference type="NCBIfam" id="TIGR01082">
    <property type="entry name" value="murC"/>
    <property type="match status" value="1"/>
</dbReference>
<dbReference type="PANTHER" id="PTHR43445:SF3">
    <property type="entry name" value="UDP-N-ACETYLMURAMATE--L-ALANINE LIGASE"/>
    <property type="match status" value="1"/>
</dbReference>
<dbReference type="PANTHER" id="PTHR43445">
    <property type="entry name" value="UDP-N-ACETYLMURAMATE--L-ALANINE LIGASE-RELATED"/>
    <property type="match status" value="1"/>
</dbReference>
<dbReference type="Pfam" id="PF01225">
    <property type="entry name" value="Mur_ligase"/>
    <property type="match status" value="1"/>
</dbReference>
<dbReference type="Pfam" id="PF02875">
    <property type="entry name" value="Mur_ligase_C"/>
    <property type="match status" value="1"/>
</dbReference>
<dbReference type="Pfam" id="PF08245">
    <property type="entry name" value="Mur_ligase_M"/>
    <property type="match status" value="1"/>
</dbReference>
<dbReference type="SUPFAM" id="SSF51984">
    <property type="entry name" value="MurCD N-terminal domain"/>
    <property type="match status" value="1"/>
</dbReference>
<dbReference type="SUPFAM" id="SSF53623">
    <property type="entry name" value="MurD-like peptide ligases, catalytic domain"/>
    <property type="match status" value="1"/>
</dbReference>
<dbReference type="SUPFAM" id="SSF53244">
    <property type="entry name" value="MurD-like peptide ligases, peptide-binding domain"/>
    <property type="match status" value="1"/>
</dbReference>